<comment type="function">
    <text evidence="3 4">Essential for segmentation and CNS development. May modulate the actions of other transcription factors, including gap and pair-rule proteins.</text>
</comment>
<comment type="interaction">
    <interactant intactId="EBI-147892">
        <id>Q24533</id>
    </interactant>
    <interactant intactId="EBI-15108203">
        <id>Q7JR80</id>
        <label>CG3884</label>
    </interactant>
    <organismsDiffer>false</organismsDiffer>
    <experiments>4</experiments>
</comment>
<comment type="interaction">
    <interactant intactId="EBI-147892">
        <id>Q24533</id>
    </interactant>
    <interactant intactId="EBI-15112591">
        <id>Q8I942</id>
        <label>Dmel\CG32846</label>
    </interactant>
    <organismsDiffer>false</organismsDiffer>
    <experiments>4</experiments>
</comment>
<comment type="interaction">
    <interactant intactId="EBI-147892">
        <id>Q24533</id>
    </interactant>
    <interactant intactId="EBI-15139688">
        <id>Q8INY5</id>
        <label>Dmel\CG5674</label>
    </interactant>
    <organismsDiffer>false</organismsDiffer>
    <experiments>4</experiments>
</comment>
<comment type="subcellular location">
    <subcellularLocation>
        <location evidence="1">Nucleus</location>
    </subcellularLocation>
</comment>
<comment type="tissue specificity">
    <text evidence="3 4">Initially expressed in a pair-rule-like pattern which is rapidly replaced by strong neuroectoderm expression.</text>
</comment>
<comment type="developmental stage">
    <text evidence="3 4">Expressed during embryogenesis.</text>
</comment>
<comment type="disruption phenotype">
    <text evidence="3 4">Flies exhibit severe segmentation defects, including loss and/or fusion of abdominal denticle belts and stripe-specific defects in pair-rule and segment polarity gene expression. Mutant embryos also exhibit loss of specific neurons, fusion of adjacent ventral nerve cord ganglia and aberrant axon scaffold organization.</text>
</comment>
<accession>Q24533</accession>
<accession>A2VED6</accession>
<accession>Q8MSP8</accession>
<accession>Q9VUD4</accession>
<gene>
    <name type="primary">D</name>
    <name type="synonym">fish</name>
    <name type="synonym">Sox70D</name>
    <name type="ORF">CG5893</name>
</gene>
<protein>
    <recommendedName>
        <fullName>SOX domain-containing protein dichaete</fullName>
    </recommendedName>
    <alternativeName>
        <fullName>Protein fish-hook</fullName>
    </alternativeName>
</protein>
<proteinExistence type="evidence at protein level"/>
<keyword id="KW-0217">Developmental protein</keyword>
<keyword id="KW-0238">DNA-binding</keyword>
<keyword id="KW-0539">Nucleus</keyword>
<keyword id="KW-1185">Reference proteome</keyword>
<evidence type="ECO:0000255" key="1">
    <source>
        <dbReference type="PROSITE-ProRule" id="PRU00267"/>
    </source>
</evidence>
<evidence type="ECO:0000256" key="2">
    <source>
        <dbReference type="SAM" id="MobiDB-lite"/>
    </source>
</evidence>
<evidence type="ECO:0000269" key="3">
    <source>
    </source>
</evidence>
<evidence type="ECO:0000269" key="4">
    <source>
    </source>
</evidence>
<evidence type="ECO:0000305" key="5"/>
<name>DICH_DROME</name>
<feature type="chain" id="PRO_0000048802" description="SOX domain-containing protein dichaete">
    <location>
        <begin position="1"/>
        <end position="382"/>
    </location>
</feature>
<feature type="DNA-binding region" description="HMG box" evidence="1">
    <location>
        <begin position="142"/>
        <end position="210"/>
    </location>
</feature>
<feature type="region of interest" description="Disordered" evidence="2">
    <location>
        <begin position="53"/>
        <end position="142"/>
    </location>
</feature>
<feature type="region of interest" description="Disordered" evidence="2">
    <location>
        <begin position="346"/>
        <end position="382"/>
    </location>
</feature>
<feature type="compositionally biased region" description="Gly residues" evidence="2">
    <location>
        <begin position="60"/>
        <end position="69"/>
    </location>
</feature>
<feature type="compositionally biased region" description="Low complexity" evidence="2">
    <location>
        <begin position="96"/>
        <end position="123"/>
    </location>
</feature>
<feature type="compositionally biased region" description="Low complexity" evidence="2">
    <location>
        <begin position="347"/>
        <end position="360"/>
    </location>
</feature>
<feature type="sequence conflict" description="In Ref. 5; AAM50530." evidence="5" ref="5">
    <location>
        <position position="127"/>
    </location>
</feature>
<dbReference type="EMBL" id="U68056">
    <property type="protein sequence ID" value="AAB49673.1"/>
    <property type="molecule type" value="mRNA"/>
</dbReference>
<dbReference type="EMBL" id="X96419">
    <property type="protein sequence ID" value="CAA65279.1"/>
    <property type="molecule type" value="mRNA"/>
</dbReference>
<dbReference type="EMBL" id="AE014296">
    <property type="protein sequence ID" value="AAF49753.1"/>
    <property type="molecule type" value="Genomic_DNA"/>
</dbReference>
<dbReference type="EMBL" id="AY118670">
    <property type="protein sequence ID" value="AAM50530.1"/>
    <property type="molecule type" value="mRNA"/>
</dbReference>
<dbReference type="EMBL" id="BT030105">
    <property type="protein sequence ID" value="ABN49244.1"/>
    <property type="molecule type" value="mRNA"/>
</dbReference>
<dbReference type="RefSeq" id="NP_001261830.1">
    <property type="nucleotide sequence ID" value="NM_001274901.1"/>
</dbReference>
<dbReference type="RefSeq" id="NP_001261831.1">
    <property type="nucleotide sequence ID" value="NM_001274902.1"/>
</dbReference>
<dbReference type="RefSeq" id="NP_001261832.1">
    <property type="nucleotide sequence ID" value="NM_001274903.1"/>
</dbReference>
<dbReference type="RefSeq" id="NP_524066.1">
    <property type="nucleotide sequence ID" value="NM_079342.3"/>
</dbReference>
<dbReference type="SMR" id="Q24533"/>
<dbReference type="BioGRID" id="64905">
    <property type="interactions" value="64"/>
</dbReference>
<dbReference type="DIP" id="DIP-21577N"/>
<dbReference type="FunCoup" id="Q24533">
    <property type="interactions" value="248"/>
</dbReference>
<dbReference type="IntAct" id="Q24533">
    <property type="interactions" value="37"/>
</dbReference>
<dbReference type="STRING" id="7227.FBpp0075488"/>
<dbReference type="PaxDb" id="7227-FBpp0075488"/>
<dbReference type="DNASU" id="39570"/>
<dbReference type="EnsemblMetazoa" id="FBtr0075746">
    <property type="protein sequence ID" value="FBpp0075488"/>
    <property type="gene ID" value="FBgn0000411"/>
</dbReference>
<dbReference type="EnsemblMetazoa" id="FBtr0333034">
    <property type="protein sequence ID" value="FBpp0305248"/>
    <property type="gene ID" value="FBgn0000411"/>
</dbReference>
<dbReference type="EnsemblMetazoa" id="FBtr0333035">
    <property type="protein sequence ID" value="FBpp0305249"/>
    <property type="gene ID" value="FBgn0000411"/>
</dbReference>
<dbReference type="EnsemblMetazoa" id="FBtr0333036">
    <property type="protein sequence ID" value="FBpp0305250"/>
    <property type="gene ID" value="FBgn0000411"/>
</dbReference>
<dbReference type="GeneID" id="39570"/>
<dbReference type="KEGG" id="dme:Dmel_CG5893"/>
<dbReference type="AGR" id="FB:FBgn0000411"/>
<dbReference type="CTD" id="39570"/>
<dbReference type="FlyBase" id="FBgn0000411">
    <property type="gene designation" value="D"/>
</dbReference>
<dbReference type="VEuPathDB" id="VectorBase:FBgn0000411"/>
<dbReference type="eggNOG" id="KOG0527">
    <property type="taxonomic scope" value="Eukaryota"/>
</dbReference>
<dbReference type="HOGENOM" id="CLU_021123_1_0_1"/>
<dbReference type="InParanoid" id="Q24533"/>
<dbReference type="OMA" id="HQSSGMH"/>
<dbReference type="OrthoDB" id="6247875at2759"/>
<dbReference type="PhylomeDB" id="Q24533"/>
<dbReference type="Reactome" id="R-DME-3769402">
    <property type="pathway name" value="Deactivation of the beta-catenin transactivating complex"/>
</dbReference>
<dbReference type="SignaLink" id="Q24533"/>
<dbReference type="BioGRID-ORCS" id="39570">
    <property type="hits" value="0 hits in 3 CRISPR screens"/>
</dbReference>
<dbReference type="GenomeRNAi" id="39570"/>
<dbReference type="PRO" id="PR:Q24533"/>
<dbReference type="Proteomes" id="UP000000803">
    <property type="component" value="Chromosome 3L"/>
</dbReference>
<dbReference type="Bgee" id="FBgn0000411">
    <property type="expression patterns" value="Expressed in transmedullary Y neuron TmY14 in brain and 103 other cell types or tissues"/>
</dbReference>
<dbReference type="ExpressionAtlas" id="Q24533">
    <property type="expression patterns" value="baseline and differential"/>
</dbReference>
<dbReference type="GO" id="GO:0005737">
    <property type="term" value="C:cytoplasm"/>
    <property type="evidence" value="ECO:0000314"/>
    <property type="project" value="FlyBase"/>
</dbReference>
<dbReference type="GO" id="GO:0005634">
    <property type="term" value="C:nucleus"/>
    <property type="evidence" value="ECO:0000314"/>
    <property type="project" value="FlyBase"/>
</dbReference>
<dbReference type="GO" id="GO:0003677">
    <property type="term" value="F:DNA binding"/>
    <property type="evidence" value="ECO:0000314"/>
    <property type="project" value="FlyBase"/>
</dbReference>
<dbReference type="GO" id="GO:0008301">
    <property type="term" value="F:DNA binding, bending"/>
    <property type="evidence" value="ECO:0000314"/>
    <property type="project" value="FlyBase"/>
</dbReference>
<dbReference type="GO" id="GO:0001228">
    <property type="term" value="F:DNA-binding transcription activator activity, RNA polymerase II-specific"/>
    <property type="evidence" value="ECO:0000318"/>
    <property type="project" value="GO_Central"/>
</dbReference>
<dbReference type="GO" id="GO:0003700">
    <property type="term" value="F:DNA-binding transcription factor activity"/>
    <property type="evidence" value="ECO:0000314"/>
    <property type="project" value="FlyBase"/>
</dbReference>
<dbReference type="GO" id="GO:0000981">
    <property type="term" value="F:DNA-binding transcription factor activity, RNA polymerase II-specific"/>
    <property type="evidence" value="ECO:0000314"/>
    <property type="project" value="FlyBase"/>
</dbReference>
<dbReference type="GO" id="GO:0140297">
    <property type="term" value="F:DNA-binding transcription factor binding"/>
    <property type="evidence" value="ECO:0000353"/>
    <property type="project" value="FlyBase"/>
</dbReference>
<dbReference type="GO" id="GO:0003730">
    <property type="term" value="F:mRNA 3'-UTR binding"/>
    <property type="evidence" value="ECO:0000314"/>
    <property type="project" value="FlyBase"/>
</dbReference>
<dbReference type="GO" id="GO:0000978">
    <property type="term" value="F:RNA polymerase II cis-regulatory region sequence-specific DNA binding"/>
    <property type="evidence" value="ECO:0000318"/>
    <property type="project" value="GO_Central"/>
</dbReference>
<dbReference type="GO" id="GO:0043565">
    <property type="term" value="F:sequence-specific DNA binding"/>
    <property type="evidence" value="ECO:0000314"/>
    <property type="project" value="FlyBase"/>
</dbReference>
<dbReference type="GO" id="GO:0007411">
    <property type="term" value="P:axon guidance"/>
    <property type="evidence" value="ECO:0000315"/>
    <property type="project" value="FlyBase"/>
</dbReference>
<dbReference type="GO" id="GO:0007350">
    <property type="term" value="P:blastoderm segmentation"/>
    <property type="evidence" value="ECO:0000315"/>
    <property type="project" value="FlyBase"/>
</dbReference>
<dbReference type="GO" id="GO:0007420">
    <property type="term" value="P:brain development"/>
    <property type="evidence" value="ECO:0000315"/>
    <property type="project" value="FlyBase"/>
</dbReference>
<dbReference type="GO" id="GO:0007417">
    <property type="term" value="P:central nervous system development"/>
    <property type="evidence" value="ECO:0000315"/>
    <property type="project" value="FlyBase"/>
</dbReference>
<dbReference type="GO" id="GO:0070983">
    <property type="term" value="P:dendrite guidance"/>
    <property type="evidence" value="ECO:0000315"/>
    <property type="project" value="FlyBase"/>
</dbReference>
<dbReference type="GO" id="GO:0009950">
    <property type="term" value="P:dorsal/ventral axis specification"/>
    <property type="evidence" value="ECO:0000315"/>
    <property type="project" value="FlyBase"/>
</dbReference>
<dbReference type="GO" id="GO:0007442">
    <property type="term" value="P:hindgut morphogenesis"/>
    <property type="evidence" value="ECO:0000315"/>
    <property type="project" value="FlyBase"/>
</dbReference>
<dbReference type="GO" id="GO:0002168">
    <property type="term" value="P:instar larval development"/>
    <property type="evidence" value="ECO:0000315"/>
    <property type="project" value="FlyBase"/>
</dbReference>
<dbReference type="GO" id="GO:0060810">
    <property type="term" value="P:intracellular mRNA localization involved in pattern specification process"/>
    <property type="evidence" value="ECO:0000315"/>
    <property type="project" value="FlyBase"/>
</dbReference>
<dbReference type="GO" id="GO:0000122">
    <property type="term" value="P:negative regulation of transcription by RNA polymerase II"/>
    <property type="evidence" value="ECO:0000314"/>
    <property type="project" value="FlyBase"/>
</dbReference>
<dbReference type="GO" id="GO:0014019">
    <property type="term" value="P:neuroblast development"/>
    <property type="evidence" value="ECO:0000315"/>
    <property type="project" value="FlyBase"/>
</dbReference>
<dbReference type="GO" id="GO:0030182">
    <property type="term" value="P:neuron differentiation"/>
    <property type="evidence" value="ECO:0000318"/>
    <property type="project" value="GO_Central"/>
</dbReference>
<dbReference type="GO" id="GO:0045893">
    <property type="term" value="P:positive regulation of DNA-templated transcription"/>
    <property type="evidence" value="ECO:0000314"/>
    <property type="project" value="FlyBase"/>
</dbReference>
<dbReference type="GO" id="GO:0045944">
    <property type="term" value="P:positive regulation of transcription by RNA polymerase II"/>
    <property type="evidence" value="ECO:0000314"/>
    <property type="project" value="FlyBase"/>
</dbReference>
<dbReference type="GO" id="GO:0035120">
    <property type="term" value="P:post-embryonic appendage morphogenesis"/>
    <property type="evidence" value="ECO:0000315"/>
    <property type="project" value="FlyBase"/>
</dbReference>
<dbReference type="GO" id="GO:0006355">
    <property type="term" value="P:regulation of DNA-templated transcription"/>
    <property type="evidence" value="ECO:0000250"/>
    <property type="project" value="FlyBase"/>
</dbReference>
<dbReference type="GO" id="GO:0010468">
    <property type="term" value="P:regulation of gene expression"/>
    <property type="evidence" value="ECO:0000315"/>
    <property type="project" value="FlyBase"/>
</dbReference>
<dbReference type="GO" id="GO:0006357">
    <property type="term" value="P:regulation of transcription by RNA polymerase II"/>
    <property type="evidence" value="ECO:0000315"/>
    <property type="project" value="FlyBase"/>
</dbReference>
<dbReference type="CDD" id="cd01388">
    <property type="entry name" value="HMG-box_SoxB"/>
    <property type="match status" value="1"/>
</dbReference>
<dbReference type="FunFam" id="1.10.30.10:FF:000002">
    <property type="entry name" value="transcription factor Sox-2"/>
    <property type="match status" value="1"/>
</dbReference>
<dbReference type="Gene3D" id="1.10.30.10">
    <property type="entry name" value="High mobility group box domain"/>
    <property type="match status" value="1"/>
</dbReference>
<dbReference type="InterPro" id="IPR009071">
    <property type="entry name" value="HMG_box_dom"/>
</dbReference>
<dbReference type="InterPro" id="IPR036910">
    <property type="entry name" value="HMG_box_dom_sf"/>
</dbReference>
<dbReference type="InterPro" id="IPR050140">
    <property type="entry name" value="SRY-related_HMG-box_TF-like"/>
</dbReference>
<dbReference type="PANTHER" id="PTHR10270:SF324">
    <property type="entry name" value="SOX DOMAIN-CONTAINING PROTEIN DICHAETE-RELATED"/>
    <property type="match status" value="1"/>
</dbReference>
<dbReference type="PANTHER" id="PTHR10270">
    <property type="entry name" value="SOX TRANSCRIPTION FACTOR"/>
    <property type="match status" value="1"/>
</dbReference>
<dbReference type="Pfam" id="PF00505">
    <property type="entry name" value="HMG_box"/>
    <property type="match status" value="1"/>
</dbReference>
<dbReference type="SMART" id="SM00398">
    <property type="entry name" value="HMG"/>
    <property type="match status" value="1"/>
</dbReference>
<dbReference type="SUPFAM" id="SSF47095">
    <property type="entry name" value="HMG-box"/>
    <property type="match status" value="1"/>
</dbReference>
<dbReference type="PROSITE" id="PS50118">
    <property type="entry name" value="HMG_BOX_2"/>
    <property type="match status" value="1"/>
</dbReference>
<reference key="1">
    <citation type="journal article" date="1996" name="Development">
        <title>The Drosophila fish-hook gene encodes a HMG domain protein essential for segmentation and CNS development.</title>
        <authorList>
            <person name="Nambu P.A."/>
            <person name="Nambu J.R."/>
        </authorList>
    </citation>
    <scope>NUCLEOTIDE SEQUENCE [MRNA]</scope>
    <scope>FUNCTION</scope>
    <scope>TISSUE SPECIFICITY</scope>
    <scope>DEVELOPMENTAL STAGE</scope>
    <scope>DISRUPTION PHENOTYPE</scope>
</reference>
<reference key="2">
    <citation type="journal article" date="1996" name="Development">
        <title>The Dichaete gene of Drosophila melanogaster encodes a SOX-domain protein required for embryonic segmentation.</title>
        <authorList>
            <person name="Russell S.R.H."/>
            <person name="Sanchez-Soriano N."/>
            <person name="Wright C.R."/>
            <person name="Ashburner M."/>
        </authorList>
    </citation>
    <scope>NUCLEOTIDE SEQUENCE [MRNA]</scope>
    <scope>FUNCTION</scope>
    <scope>TISSUE SPECIFICITY</scope>
    <scope>DEVELOPMENTAL STAGE</scope>
    <scope>DISRUPTION PHENOTYPE</scope>
    <source>
        <strain>Oregon-R</strain>
        <tissue>Embryo</tissue>
    </source>
</reference>
<reference key="3">
    <citation type="journal article" date="2000" name="Science">
        <title>The genome sequence of Drosophila melanogaster.</title>
        <authorList>
            <person name="Adams M.D."/>
            <person name="Celniker S.E."/>
            <person name="Holt R.A."/>
            <person name="Evans C.A."/>
            <person name="Gocayne J.D."/>
            <person name="Amanatides P.G."/>
            <person name="Scherer S.E."/>
            <person name="Li P.W."/>
            <person name="Hoskins R.A."/>
            <person name="Galle R.F."/>
            <person name="George R.A."/>
            <person name="Lewis S.E."/>
            <person name="Richards S."/>
            <person name="Ashburner M."/>
            <person name="Henderson S.N."/>
            <person name="Sutton G.G."/>
            <person name="Wortman J.R."/>
            <person name="Yandell M.D."/>
            <person name="Zhang Q."/>
            <person name="Chen L.X."/>
            <person name="Brandon R.C."/>
            <person name="Rogers Y.-H.C."/>
            <person name="Blazej R.G."/>
            <person name="Champe M."/>
            <person name="Pfeiffer B.D."/>
            <person name="Wan K.H."/>
            <person name="Doyle C."/>
            <person name="Baxter E.G."/>
            <person name="Helt G."/>
            <person name="Nelson C.R."/>
            <person name="Miklos G.L.G."/>
            <person name="Abril J.F."/>
            <person name="Agbayani A."/>
            <person name="An H.-J."/>
            <person name="Andrews-Pfannkoch C."/>
            <person name="Baldwin D."/>
            <person name="Ballew R.M."/>
            <person name="Basu A."/>
            <person name="Baxendale J."/>
            <person name="Bayraktaroglu L."/>
            <person name="Beasley E.M."/>
            <person name="Beeson K.Y."/>
            <person name="Benos P.V."/>
            <person name="Berman B.P."/>
            <person name="Bhandari D."/>
            <person name="Bolshakov S."/>
            <person name="Borkova D."/>
            <person name="Botchan M.R."/>
            <person name="Bouck J."/>
            <person name="Brokstein P."/>
            <person name="Brottier P."/>
            <person name="Burtis K.C."/>
            <person name="Busam D.A."/>
            <person name="Butler H."/>
            <person name="Cadieu E."/>
            <person name="Center A."/>
            <person name="Chandra I."/>
            <person name="Cherry J.M."/>
            <person name="Cawley S."/>
            <person name="Dahlke C."/>
            <person name="Davenport L.B."/>
            <person name="Davies P."/>
            <person name="de Pablos B."/>
            <person name="Delcher A."/>
            <person name="Deng Z."/>
            <person name="Mays A.D."/>
            <person name="Dew I."/>
            <person name="Dietz S.M."/>
            <person name="Dodson K."/>
            <person name="Doup L.E."/>
            <person name="Downes M."/>
            <person name="Dugan-Rocha S."/>
            <person name="Dunkov B.C."/>
            <person name="Dunn P."/>
            <person name="Durbin K.J."/>
            <person name="Evangelista C.C."/>
            <person name="Ferraz C."/>
            <person name="Ferriera S."/>
            <person name="Fleischmann W."/>
            <person name="Fosler C."/>
            <person name="Gabrielian A.E."/>
            <person name="Garg N.S."/>
            <person name="Gelbart W.M."/>
            <person name="Glasser K."/>
            <person name="Glodek A."/>
            <person name="Gong F."/>
            <person name="Gorrell J.H."/>
            <person name="Gu Z."/>
            <person name="Guan P."/>
            <person name="Harris M."/>
            <person name="Harris N.L."/>
            <person name="Harvey D.A."/>
            <person name="Heiman T.J."/>
            <person name="Hernandez J.R."/>
            <person name="Houck J."/>
            <person name="Hostin D."/>
            <person name="Houston K.A."/>
            <person name="Howland T.J."/>
            <person name="Wei M.-H."/>
            <person name="Ibegwam C."/>
            <person name="Jalali M."/>
            <person name="Kalush F."/>
            <person name="Karpen G.H."/>
            <person name="Ke Z."/>
            <person name="Kennison J.A."/>
            <person name="Ketchum K.A."/>
            <person name="Kimmel B.E."/>
            <person name="Kodira C.D."/>
            <person name="Kraft C.L."/>
            <person name="Kravitz S."/>
            <person name="Kulp D."/>
            <person name="Lai Z."/>
            <person name="Lasko P."/>
            <person name="Lei Y."/>
            <person name="Levitsky A.A."/>
            <person name="Li J.H."/>
            <person name="Li Z."/>
            <person name="Liang Y."/>
            <person name="Lin X."/>
            <person name="Liu X."/>
            <person name="Mattei B."/>
            <person name="McIntosh T.C."/>
            <person name="McLeod M.P."/>
            <person name="McPherson D."/>
            <person name="Merkulov G."/>
            <person name="Milshina N.V."/>
            <person name="Mobarry C."/>
            <person name="Morris J."/>
            <person name="Moshrefi A."/>
            <person name="Mount S.M."/>
            <person name="Moy M."/>
            <person name="Murphy B."/>
            <person name="Murphy L."/>
            <person name="Muzny D.M."/>
            <person name="Nelson D.L."/>
            <person name="Nelson D.R."/>
            <person name="Nelson K.A."/>
            <person name="Nixon K."/>
            <person name="Nusskern D.R."/>
            <person name="Pacleb J.M."/>
            <person name="Palazzolo M."/>
            <person name="Pittman G.S."/>
            <person name="Pan S."/>
            <person name="Pollard J."/>
            <person name="Puri V."/>
            <person name="Reese M.G."/>
            <person name="Reinert K."/>
            <person name="Remington K."/>
            <person name="Saunders R.D.C."/>
            <person name="Scheeler F."/>
            <person name="Shen H."/>
            <person name="Shue B.C."/>
            <person name="Siden-Kiamos I."/>
            <person name="Simpson M."/>
            <person name="Skupski M.P."/>
            <person name="Smith T.J."/>
            <person name="Spier E."/>
            <person name="Spradling A.C."/>
            <person name="Stapleton M."/>
            <person name="Strong R."/>
            <person name="Sun E."/>
            <person name="Svirskas R."/>
            <person name="Tector C."/>
            <person name="Turner R."/>
            <person name="Venter E."/>
            <person name="Wang A.H."/>
            <person name="Wang X."/>
            <person name="Wang Z.-Y."/>
            <person name="Wassarman D.A."/>
            <person name="Weinstock G.M."/>
            <person name="Weissenbach J."/>
            <person name="Williams S.M."/>
            <person name="Woodage T."/>
            <person name="Worley K.C."/>
            <person name="Wu D."/>
            <person name="Yang S."/>
            <person name="Yao Q.A."/>
            <person name="Ye J."/>
            <person name="Yeh R.-F."/>
            <person name="Zaveri J.S."/>
            <person name="Zhan M."/>
            <person name="Zhang G."/>
            <person name="Zhao Q."/>
            <person name="Zheng L."/>
            <person name="Zheng X.H."/>
            <person name="Zhong F.N."/>
            <person name="Zhong W."/>
            <person name="Zhou X."/>
            <person name="Zhu S.C."/>
            <person name="Zhu X."/>
            <person name="Smith H.O."/>
            <person name="Gibbs R.A."/>
            <person name="Myers E.W."/>
            <person name="Rubin G.M."/>
            <person name="Venter J.C."/>
        </authorList>
    </citation>
    <scope>NUCLEOTIDE SEQUENCE [LARGE SCALE GENOMIC DNA]</scope>
    <source>
        <strain>Berkeley</strain>
    </source>
</reference>
<reference key="4">
    <citation type="journal article" date="2002" name="Genome Biol.">
        <title>Annotation of the Drosophila melanogaster euchromatic genome: a systematic review.</title>
        <authorList>
            <person name="Misra S."/>
            <person name="Crosby M.A."/>
            <person name="Mungall C.J."/>
            <person name="Matthews B.B."/>
            <person name="Campbell K.S."/>
            <person name="Hradecky P."/>
            <person name="Huang Y."/>
            <person name="Kaminker J.S."/>
            <person name="Millburn G.H."/>
            <person name="Prochnik S.E."/>
            <person name="Smith C.D."/>
            <person name="Tupy J.L."/>
            <person name="Whitfield E.J."/>
            <person name="Bayraktaroglu L."/>
            <person name="Berman B.P."/>
            <person name="Bettencourt B.R."/>
            <person name="Celniker S.E."/>
            <person name="de Grey A.D.N.J."/>
            <person name="Drysdale R.A."/>
            <person name="Harris N.L."/>
            <person name="Richter J."/>
            <person name="Russo S."/>
            <person name="Schroeder A.J."/>
            <person name="Shu S.Q."/>
            <person name="Stapleton M."/>
            <person name="Yamada C."/>
            <person name="Ashburner M."/>
            <person name="Gelbart W.M."/>
            <person name="Rubin G.M."/>
            <person name="Lewis S.E."/>
        </authorList>
    </citation>
    <scope>GENOME REANNOTATION</scope>
    <source>
        <strain>Berkeley</strain>
    </source>
</reference>
<reference key="5">
    <citation type="submission" date="2007-02" db="EMBL/GenBank/DDBJ databases">
        <authorList>
            <person name="Stapleton M."/>
            <person name="Brokstein P."/>
            <person name="Hong L."/>
            <person name="Agbayani A."/>
            <person name="Carlson J.W."/>
            <person name="Champe M."/>
            <person name="Chavez C."/>
            <person name="Dorsett V."/>
            <person name="Dresnek D."/>
            <person name="Farfan D."/>
            <person name="Frise E."/>
            <person name="George R.A."/>
            <person name="Gonzalez M."/>
            <person name="Guarin H."/>
            <person name="Kapadia B."/>
            <person name="Kronmiller B."/>
            <person name="Li P.W."/>
            <person name="Liao G."/>
            <person name="Miranda A."/>
            <person name="Mungall C.J."/>
            <person name="Nunoo J."/>
            <person name="Pacleb J.M."/>
            <person name="Paragas V."/>
            <person name="Park S."/>
            <person name="Patel S."/>
            <person name="Phouanenavong S."/>
            <person name="Wan K.H."/>
            <person name="Yu C."/>
            <person name="Lewis S.E."/>
            <person name="Rubin G.M."/>
            <person name="Celniker S.E."/>
        </authorList>
    </citation>
    <scope>NUCLEOTIDE SEQUENCE [LARGE SCALE MRNA]</scope>
    <source>
        <strain>Berkeley</strain>
        <tissue>Testis</tissue>
    </source>
</reference>
<sequence length="382" mass="40212">MATLSTHPNYGFHLGQAQGLEDYAPQSQLQLSPGMDMDIKRVLHYSQSLAAMGGSPNGPAGQGVNGSSGMGHHMSSHMTPHHMHQAVSAQQTLSPNSSIGSAGSLGSQSSLGSNGSGLNSSSGHQSAGMHSLATSPGQEGHIKRPMNAFMVWSRLQRRQIAKDNPKMHNSEISKRLGAEWKLLAESEKRPFIDEAKRLRALHMKEHPDYKYRPRRKPKNPLTAGPQGGLQMQAGGMGQQKLGAGPGAGAGGYNPFHQLPPYFAPSHHLDQGYPVPYFGGFDPLALSKLHQSQAAAAAAVNNQGQQQGQAPPQLPPTSLSSFYSGIYSGISAPSLYAAHSANAAGLYPSSSTSSPGSSPGTITPNGMDGSMDSALRRPVPVLY</sequence>
<organism>
    <name type="scientific">Drosophila melanogaster</name>
    <name type="common">Fruit fly</name>
    <dbReference type="NCBI Taxonomy" id="7227"/>
    <lineage>
        <taxon>Eukaryota</taxon>
        <taxon>Metazoa</taxon>
        <taxon>Ecdysozoa</taxon>
        <taxon>Arthropoda</taxon>
        <taxon>Hexapoda</taxon>
        <taxon>Insecta</taxon>
        <taxon>Pterygota</taxon>
        <taxon>Neoptera</taxon>
        <taxon>Endopterygota</taxon>
        <taxon>Diptera</taxon>
        <taxon>Brachycera</taxon>
        <taxon>Muscomorpha</taxon>
        <taxon>Ephydroidea</taxon>
        <taxon>Drosophilidae</taxon>
        <taxon>Drosophila</taxon>
        <taxon>Sophophora</taxon>
    </lineage>
</organism>